<protein>
    <recommendedName>
        <fullName evidence="1">Acireductone dioxygenase</fullName>
    </recommendedName>
    <alternativeName>
        <fullName evidence="1">1,2-dihydroxy-3-keto-5-methylthiopentene dioxygenase</fullName>
        <shortName evidence="1">DHK-MTPene dioxygenase</shortName>
    </alternativeName>
    <alternativeName>
        <fullName evidence="1">Acireductone dioxygenase (Fe(2+)-requiring)</fullName>
        <shortName evidence="1">ARD'</shortName>
        <shortName evidence="1">Fe-ARD</shortName>
        <ecNumber evidence="1">1.13.11.54</ecNumber>
    </alternativeName>
    <alternativeName>
        <fullName evidence="1">Acireductone dioxygenase (Ni(2+)-requiring)</fullName>
        <shortName evidence="1">ARD</shortName>
        <shortName evidence="1">Ni-ARD</shortName>
        <ecNumber evidence="1">1.13.11.53</ecNumber>
    </alternativeName>
</protein>
<accession>Q6HEC6</accession>
<keyword id="KW-0028">Amino-acid biosynthesis</keyword>
<keyword id="KW-0223">Dioxygenase</keyword>
<keyword id="KW-0408">Iron</keyword>
<keyword id="KW-0479">Metal-binding</keyword>
<keyword id="KW-0486">Methionine biosynthesis</keyword>
<keyword id="KW-0533">Nickel</keyword>
<keyword id="KW-0560">Oxidoreductase</keyword>
<gene>
    <name evidence="1" type="primary">mtnD</name>
    <name type="ordered locus">BT9727_3781</name>
</gene>
<name>MTND_BACHK</name>
<feature type="chain" id="PRO_0000359180" description="Acireductone dioxygenase">
    <location>
        <begin position="1"/>
        <end position="170"/>
    </location>
</feature>
<feature type="binding site" evidence="1">
    <location>
        <position position="99"/>
    </location>
    <ligand>
        <name>Fe(2+)</name>
        <dbReference type="ChEBI" id="CHEBI:29033"/>
    </ligand>
</feature>
<feature type="binding site" evidence="1">
    <location>
        <position position="99"/>
    </location>
    <ligand>
        <name>Ni(2+)</name>
        <dbReference type="ChEBI" id="CHEBI:49786"/>
    </ligand>
</feature>
<feature type="binding site" evidence="1">
    <location>
        <position position="101"/>
    </location>
    <ligand>
        <name>Fe(2+)</name>
        <dbReference type="ChEBI" id="CHEBI:29033"/>
    </ligand>
</feature>
<feature type="binding site" evidence="1">
    <location>
        <position position="101"/>
    </location>
    <ligand>
        <name>Ni(2+)</name>
        <dbReference type="ChEBI" id="CHEBI:49786"/>
    </ligand>
</feature>
<feature type="binding site" evidence="1">
    <location>
        <position position="105"/>
    </location>
    <ligand>
        <name>Fe(2+)</name>
        <dbReference type="ChEBI" id="CHEBI:29033"/>
    </ligand>
</feature>
<feature type="binding site" evidence="1">
    <location>
        <position position="105"/>
    </location>
    <ligand>
        <name>Ni(2+)</name>
        <dbReference type="ChEBI" id="CHEBI:49786"/>
    </ligand>
</feature>
<feature type="binding site" evidence="1">
    <location>
        <position position="144"/>
    </location>
    <ligand>
        <name>Fe(2+)</name>
        <dbReference type="ChEBI" id="CHEBI:29033"/>
    </ligand>
</feature>
<feature type="binding site" evidence="1">
    <location>
        <position position="144"/>
    </location>
    <ligand>
        <name>Ni(2+)</name>
        <dbReference type="ChEBI" id="CHEBI:49786"/>
    </ligand>
</feature>
<feature type="site" description="May play a role in metal incorporation in vivo" evidence="1">
    <location>
        <position position="98"/>
    </location>
</feature>
<feature type="site" description="May play a role in transmitting local conformational changes" evidence="1">
    <location>
        <position position="104"/>
    </location>
</feature>
<feature type="site" description="Important to generate the dianion" evidence="1">
    <location>
        <position position="107"/>
    </location>
</feature>
<dbReference type="EC" id="1.13.11.54" evidence="1"/>
<dbReference type="EC" id="1.13.11.53" evidence="1"/>
<dbReference type="EMBL" id="AE017355">
    <property type="protein sequence ID" value="AAT61067.1"/>
    <property type="molecule type" value="Genomic_DNA"/>
</dbReference>
<dbReference type="RefSeq" id="WP_000057305.1">
    <property type="nucleotide sequence ID" value="NC_005957.1"/>
</dbReference>
<dbReference type="RefSeq" id="YP_038100.1">
    <property type="nucleotide sequence ID" value="NC_005957.1"/>
</dbReference>
<dbReference type="SMR" id="Q6HEC6"/>
<dbReference type="KEGG" id="btk:BT9727_3781"/>
<dbReference type="PATRIC" id="fig|281309.8.peg.4031"/>
<dbReference type="HOGENOM" id="CLU_125400_0_0_9"/>
<dbReference type="UniPathway" id="UPA00904">
    <property type="reaction ID" value="UER00878"/>
</dbReference>
<dbReference type="Proteomes" id="UP000001301">
    <property type="component" value="Chromosome"/>
</dbReference>
<dbReference type="GO" id="GO:0010308">
    <property type="term" value="F:acireductone dioxygenase (Ni2+-requiring) activity"/>
    <property type="evidence" value="ECO:0007669"/>
    <property type="project" value="UniProtKB-UniRule"/>
</dbReference>
<dbReference type="GO" id="GO:0010309">
    <property type="term" value="F:acireductone dioxygenase [iron(II)-requiring] activity"/>
    <property type="evidence" value="ECO:0007669"/>
    <property type="project" value="UniProtKB-UniRule"/>
</dbReference>
<dbReference type="GO" id="GO:0005506">
    <property type="term" value="F:iron ion binding"/>
    <property type="evidence" value="ECO:0007669"/>
    <property type="project" value="UniProtKB-UniRule"/>
</dbReference>
<dbReference type="GO" id="GO:0016151">
    <property type="term" value="F:nickel cation binding"/>
    <property type="evidence" value="ECO:0007669"/>
    <property type="project" value="UniProtKB-UniRule"/>
</dbReference>
<dbReference type="GO" id="GO:0019509">
    <property type="term" value="P:L-methionine salvage from methylthioadenosine"/>
    <property type="evidence" value="ECO:0007669"/>
    <property type="project" value="UniProtKB-UniRule"/>
</dbReference>
<dbReference type="GO" id="GO:0019284">
    <property type="term" value="P:L-methionine salvage from S-adenosylmethionine"/>
    <property type="evidence" value="ECO:0007669"/>
    <property type="project" value="InterPro"/>
</dbReference>
<dbReference type="CDD" id="cd02232">
    <property type="entry name" value="cupin_ARD"/>
    <property type="match status" value="1"/>
</dbReference>
<dbReference type="FunFam" id="2.60.120.10:FF:000056">
    <property type="entry name" value="Acireductone dioxygenase"/>
    <property type="match status" value="1"/>
</dbReference>
<dbReference type="Gene3D" id="2.60.120.10">
    <property type="entry name" value="Jelly Rolls"/>
    <property type="match status" value="1"/>
</dbReference>
<dbReference type="HAMAP" id="MF_01682">
    <property type="entry name" value="Salvage_MtnD"/>
    <property type="match status" value="1"/>
</dbReference>
<dbReference type="InterPro" id="IPR004313">
    <property type="entry name" value="ARD"/>
</dbReference>
<dbReference type="InterPro" id="IPR023956">
    <property type="entry name" value="ARD_bac"/>
</dbReference>
<dbReference type="InterPro" id="IPR014710">
    <property type="entry name" value="RmlC-like_jellyroll"/>
</dbReference>
<dbReference type="InterPro" id="IPR011051">
    <property type="entry name" value="RmlC_Cupin_sf"/>
</dbReference>
<dbReference type="PANTHER" id="PTHR23418">
    <property type="entry name" value="ACIREDUCTONE DIOXYGENASE"/>
    <property type="match status" value="1"/>
</dbReference>
<dbReference type="PANTHER" id="PTHR23418:SF0">
    <property type="entry name" value="ACIREDUCTONE DIOXYGENASE"/>
    <property type="match status" value="1"/>
</dbReference>
<dbReference type="Pfam" id="PF03079">
    <property type="entry name" value="ARD"/>
    <property type="match status" value="1"/>
</dbReference>
<dbReference type="SUPFAM" id="SSF51182">
    <property type="entry name" value="RmlC-like cupins"/>
    <property type="match status" value="1"/>
</dbReference>
<reference key="1">
    <citation type="journal article" date="2006" name="J. Bacteriol.">
        <title>Pathogenomic sequence analysis of Bacillus cereus and Bacillus thuringiensis isolates closely related to Bacillus anthracis.</title>
        <authorList>
            <person name="Han C.S."/>
            <person name="Xie G."/>
            <person name="Challacombe J.F."/>
            <person name="Altherr M.R."/>
            <person name="Bhotika S.S."/>
            <person name="Bruce D."/>
            <person name="Campbell C.S."/>
            <person name="Campbell M.L."/>
            <person name="Chen J."/>
            <person name="Chertkov O."/>
            <person name="Cleland C."/>
            <person name="Dimitrijevic M."/>
            <person name="Doggett N.A."/>
            <person name="Fawcett J.J."/>
            <person name="Glavina T."/>
            <person name="Goodwin L.A."/>
            <person name="Hill K.K."/>
            <person name="Hitchcock P."/>
            <person name="Jackson P.J."/>
            <person name="Keim P."/>
            <person name="Kewalramani A.R."/>
            <person name="Longmire J."/>
            <person name="Lucas S."/>
            <person name="Malfatti S."/>
            <person name="McMurry K."/>
            <person name="Meincke L.J."/>
            <person name="Misra M."/>
            <person name="Moseman B.L."/>
            <person name="Mundt M."/>
            <person name="Munk A.C."/>
            <person name="Okinaka R.T."/>
            <person name="Parson-Quintana B."/>
            <person name="Reilly L.P."/>
            <person name="Richardson P."/>
            <person name="Robinson D.L."/>
            <person name="Rubin E."/>
            <person name="Saunders E."/>
            <person name="Tapia R."/>
            <person name="Tesmer J.G."/>
            <person name="Thayer N."/>
            <person name="Thompson L.S."/>
            <person name="Tice H."/>
            <person name="Ticknor L.O."/>
            <person name="Wills P.L."/>
            <person name="Brettin T.S."/>
            <person name="Gilna P."/>
        </authorList>
    </citation>
    <scope>NUCLEOTIDE SEQUENCE [LARGE SCALE GENOMIC DNA]</scope>
    <source>
        <strain>97-27</strain>
    </source>
</reference>
<comment type="function">
    <text evidence="1">Catalyzes 2 different reactions between oxygen and the acireductone 1,2-dihydroxy-3-keto-5-methylthiopentene (DHK-MTPene) depending upon the metal bound in the active site. Fe-containing acireductone dioxygenase (Fe-ARD) produces formate and 2-keto-4-methylthiobutyrate (KMTB), the alpha-ketoacid precursor of methionine in the methionine recycle pathway. Ni-containing acireductone dioxygenase (Ni-ARD) produces methylthiopropionate, carbon monoxide and formate, and does not lie on the methionine recycle pathway.</text>
</comment>
<comment type="catalytic activity">
    <reaction evidence="1">
        <text>1,2-dihydroxy-5-(methylsulfanyl)pent-1-en-3-one + O2 = 3-(methylsulfanyl)propanoate + CO + formate + 2 H(+)</text>
        <dbReference type="Rhea" id="RHEA:14161"/>
        <dbReference type="ChEBI" id="CHEBI:15378"/>
        <dbReference type="ChEBI" id="CHEBI:15379"/>
        <dbReference type="ChEBI" id="CHEBI:15740"/>
        <dbReference type="ChEBI" id="CHEBI:17245"/>
        <dbReference type="ChEBI" id="CHEBI:49016"/>
        <dbReference type="ChEBI" id="CHEBI:49252"/>
        <dbReference type="EC" id="1.13.11.53"/>
    </reaction>
</comment>
<comment type="catalytic activity">
    <reaction evidence="1">
        <text>1,2-dihydroxy-5-(methylsulfanyl)pent-1-en-3-one + O2 = 4-methylsulfanyl-2-oxobutanoate + formate + 2 H(+)</text>
        <dbReference type="Rhea" id="RHEA:24504"/>
        <dbReference type="ChEBI" id="CHEBI:15378"/>
        <dbReference type="ChEBI" id="CHEBI:15379"/>
        <dbReference type="ChEBI" id="CHEBI:15740"/>
        <dbReference type="ChEBI" id="CHEBI:16723"/>
        <dbReference type="ChEBI" id="CHEBI:49252"/>
        <dbReference type="EC" id="1.13.11.54"/>
    </reaction>
</comment>
<comment type="cofactor">
    <cofactor evidence="1">
        <name>Fe(2+)</name>
        <dbReference type="ChEBI" id="CHEBI:29033"/>
    </cofactor>
    <text evidence="1">Binds 1 Fe(2+) cation per monomer.</text>
</comment>
<comment type="cofactor">
    <cofactor evidence="1">
        <name>Ni(2+)</name>
        <dbReference type="ChEBI" id="CHEBI:49786"/>
    </cofactor>
    <text evidence="1">Binds 1 nickel ion per monomer.</text>
</comment>
<comment type="pathway">
    <text evidence="1">Amino-acid biosynthesis; L-methionine biosynthesis via salvage pathway; L-methionine from S-methyl-5-thio-alpha-D-ribose 1-phosphate: step 5/6.</text>
</comment>
<comment type="subunit">
    <text evidence="1">Monomer.</text>
</comment>
<comment type="similarity">
    <text evidence="1">Belongs to the acireductone dioxygenase (ARD) family.</text>
</comment>
<organism>
    <name type="scientific">Bacillus thuringiensis subsp. konkukian (strain 97-27)</name>
    <dbReference type="NCBI Taxonomy" id="281309"/>
    <lineage>
        <taxon>Bacteria</taxon>
        <taxon>Bacillati</taxon>
        <taxon>Bacillota</taxon>
        <taxon>Bacilli</taxon>
        <taxon>Bacillales</taxon>
        <taxon>Bacillaceae</taxon>
        <taxon>Bacillus</taxon>
        <taxon>Bacillus cereus group</taxon>
    </lineage>
</organism>
<evidence type="ECO:0000255" key="1">
    <source>
        <dbReference type="HAMAP-Rule" id="MF_01682"/>
    </source>
</evidence>
<proteinExistence type="inferred from homology"/>
<sequence>MAQIRIHEINTRIENEVEVSKFLQEEGVLYEKWNISKLPTHLKENYSLTDENKAEILAVFSKEIADVSARRGYKAHDVISLSNSTPNLDELLINFQKEHHHTDDEVRFIVSGHGIFAIEGKDGTFFDVELDPGDLISVPENARHYFTLQDDRQVVAIRIFVTTEGWVPIY</sequence>